<keyword id="KW-0007">Acetylation</keyword>
<keyword id="KW-0051">Antiviral defense</keyword>
<keyword id="KW-0072">Autophagy</keyword>
<keyword id="KW-0175">Coiled coil</keyword>
<keyword id="KW-0963">Cytoplasm</keyword>
<keyword id="KW-0391">Immunity</keyword>
<keyword id="KW-0399">Innate immunity</keyword>
<keyword id="KW-0479">Metal-binding</keyword>
<keyword id="KW-0539">Nucleus</keyword>
<keyword id="KW-0597">Phosphoprotein</keyword>
<keyword id="KW-0808">Transferase</keyword>
<keyword id="KW-0832">Ubl conjugation</keyword>
<keyword id="KW-0833">Ubl conjugation pathway</keyword>
<keyword id="KW-0862">Zinc</keyword>
<keyword id="KW-0863">Zinc-finger</keyword>
<sequence length="494" mass="56925">MASRILVNIKEEVTCPICLELLTEPLSLDCGHSFCQACITANHKESTLHQGERSCPLCRMSYPSENLRPNRHLANIVERLKEVMLSPEEGQKVDHCARHGEKLLLFCQQDGNVICWLCERSQEHRGHHTFLVEEVAEKYQGKLQVALEMMRQKQQDAEKLEADVREEQASWKIQIQNDKTNIMAEFKQLRDILDCEESKELQNLEKEEKNILKRLVQSESDMVLQTQSIRVLISDLERRLQGSVMELLQGVDDVIKRIEKVTLQKPKTFLNEKRRVFRAPDLKGMLQAFKELTEVQRYWAHVTLVPSHPSCTVISEDERQVRYQVPIHQPLVKVKYFYGVLGSLSITSGKHYWEVDVSNKRGWILGVCGSWKCNAKWNVLRPENYQPKNGYWVIGLRNTDNYSAFQDAVKYSDVQDGSRSVSSGPLIVPLFMTICPNRVGVFLDYEACTISFFNVTSNGFLIYKFSNCHFSYPVFPYFSPTTCELPMTLCSPSS</sequence>
<feature type="initiator methionine" description="Removed" evidence="3">
    <location>
        <position position="1"/>
    </location>
</feature>
<feature type="chain" id="PRO_0000273452" description="Tripartite motif-containing protein 5">
    <location>
        <begin position="2"/>
        <end position="494"/>
    </location>
</feature>
<feature type="domain" description="B30.2/SPRY" evidence="7">
    <location>
        <begin position="280"/>
        <end position="494"/>
    </location>
</feature>
<feature type="zinc finger region" description="RING-type" evidence="6">
    <location>
        <begin position="15"/>
        <end position="59"/>
    </location>
</feature>
<feature type="zinc finger region" description="B box-type" evidence="5">
    <location>
        <begin position="91"/>
        <end position="132"/>
    </location>
</feature>
<feature type="region of interest" description="Required for interaction with GABARAP and for autophagy" evidence="2">
    <location>
        <begin position="186"/>
        <end position="199"/>
    </location>
</feature>
<feature type="coiled-coil region" evidence="4">
    <location>
        <begin position="132"/>
        <end position="223"/>
    </location>
</feature>
<feature type="binding site" evidence="5">
    <location>
        <position position="96"/>
    </location>
    <ligand>
        <name>Zn(2+)</name>
        <dbReference type="ChEBI" id="CHEBI:29105"/>
    </ligand>
</feature>
<feature type="binding site" evidence="5">
    <location>
        <position position="99"/>
    </location>
    <ligand>
        <name>Zn(2+)</name>
        <dbReference type="ChEBI" id="CHEBI:29105"/>
    </ligand>
</feature>
<feature type="binding site" evidence="5">
    <location>
        <position position="118"/>
    </location>
    <ligand>
        <name>Zn(2+)</name>
        <dbReference type="ChEBI" id="CHEBI:29105"/>
    </ligand>
</feature>
<feature type="binding site" evidence="5">
    <location>
        <position position="124"/>
    </location>
    <ligand>
        <name>Zn(2+)</name>
        <dbReference type="ChEBI" id="CHEBI:29105"/>
    </ligand>
</feature>
<feature type="modified residue" description="N-acetylalanine" evidence="3">
    <location>
        <position position="2"/>
    </location>
</feature>
<feature type="modified residue" description="Phosphoserine" evidence="3">
    <location>
        <position position="86"/>
    </location>
</feature>
<comment type="function">
    <text evidence="3">Capsid-specific restriction factor that prevents infection from non-host-adapted retroviruses. Blocks viral replication early in the life cycle, after viral entry but before reverse transcription. In addition to acting as a capsid-specific restriction factor, also acts as a pattern recognition receptor that activates innate immune signaling in response to the retroviral capsid lattice. Binding to the viral capsid triggers its E3 ubiquitin ligase activity, and in concert with the heterodimeric ubiquitin conjugating enzyme complex UBE2V1-UBE2N (also known as UBC13-UEV1A complex) generates 'Lys-63'-linked polyubiquitin chains, which in turn are catalysts in the autophosphorylation of the MAP3K7/TAK1 complex (includes TAK1, TAB2, and TAB3). Activation of the MAP3K7/TAK1 complex by autophosphorylation results in the induction and expression of NF-kappa-B and MAPK-responsive inflammatory genes, thereby leading to an innate immune response in the infected cell. Plays a role in regulating autophagy through activation of autophagy regulator BECN1 by causing its dissociation from its inhibitors BCL2 and TAB2.</text>
</comment>
<comment type="catalytic activity">
    <reaction>
        <text>S-ubiquitinyl-[E2 ubiquitin-conjugating enzyme]-L-cysteine + [acceptor protein]-L-lysine = [E2 ubiquitin-conjugating enzyme]-L-cysteine + N(6)-ubiquitinyl-[acceptor protein]-L-lysine.</text>
        <dbReference type="EC" id="2.3.2.27"/>
    </reaction>
</comment>
<comment type="pathway">
    <text>Protein modification; protein ubiquitination.</text>
</comment>
<comment type="subunit">
    <text evidence="2 3">Can form homodimers and homotrimers. In addition to lower-order dimerization, also exhibits a higher-order multimerization and both low- and high-order multimerizations are essential for its restriction activity. Interacts with BTBD1 and BTBD2. Interacts with PSMC4, PSMC5, PSMD7 and HSPA8/HSC70. Interacts (via B30.2/SPRY domain) with HSPA1A/B. Interacts with PSMC2, MAP3K7/TAK1, TAB2 and TAB3. Interacts with SQSTM1. Interacts with TRIM6 and TRIM34. Interacts with ULK1 (phosphorylated form), GABARAP, GABARAPL1, GABARAPL2, MAP1LC3A, MAP1LC3C and BECN1.</text>
</comment>
<comment type="subcellular location">
    <subcellularLocation>
        <location evidence="2">Cytoplasm</location>
    </subcellularLocation>
    <subcellularLocation>
        <location evidence="2">Nucleus</location>
    </subcellularLocation>
    <text evidence="2">Predominantly localizes in cytoplasmic bodies. Localization may be influenced by the coexpression of other TRIM proteins, hence partial nuclear localization is observed in the presence of TRIM22 or TRIM27. In cytoplasmic bodies, colocalizes with proteasomal subunits and SQSTM1.</text>
</comment>
<comment type="domain">
    <text evidence="2 3">The B box-type zinc finger domain and the coiled-coil domain contribute to the higher and low order multimerization respectively which is essential for restriction activity. The coiled coil domain is important for higher order multimerization by promoting the initial dimerization.</text>
</comment>
<comment type="domain">
    <text evidence="1">The B30.2/SPRY domain acts as a capsid recognition domain. Polymorphisms in this domain explain the observed species-specific differences among orthologs (By similarity).</text>
</comment>
<comment type="domain">
    <text evidence="1">The RING-type zinc finger domain confers E3 ubiquitin ligase activity and is essential for retrovirus restriction activity, autoubiquitination and higher-order multimerization.</text>
</comment>
<comment type="PTM">
    <text evidence="1">Degraded in a proteasome-independent fashion in the absence of viral infection but in a proteasome-dependent fashion following exposure to restriction sensitive virus.</text>
</comment>
<comment type="PTM">
    <text evidence="1">Autoubiquitinated in a RING finger- and UBE2D2-dependent manner. Monoubiquitinated by TRIM21. Deubiquitinated by Yersinia YopJ. Ubiquitination may not lead to proteasomal degradation (By similarity).</text>
</comment>
<comment type="similarity">
    <text evidence="8">Belongs to the TRIM/RBCC family.</text>
</comment>
<protein>
    <recommendedName>
        <fullName>Tripartite motif-containing protein 5</fullName>
        <ecNumber>2.3.2.27</ecNumber>
    </recommendedName>
    <alternativeName>
        <fullName evidence="8">RING-type E3 ubiquitin transferase TRIM5</fullName>
    </alternativeName>
    <alternativeName>
        <fullName>TRIM5alpha</fullName>
    </alternativeName>
</protein>
<accession>Q5D7I5</accession>
<gene>
    <name type="primary">TRIM5</name>
</gene>
<organism>
    <name type="scientific">Cebuella pygmaea</name>
    <name type="common">Pygmy marmoset</name>
    <name type="synonym">Callithrix pygmaea</name>
    <dbReference type="NCBI Taxonomy" id="9493"/>
    <lineage>
        <taxon>Eukaryota</taxon>
        <taxon>Metazoa</taxon>
        <taxon>Chordata</taxon>
        <taxon>Craniata</taxon>
        <taxon>Vertebrata</taxon>
        <taxon>Euteleostomi</taxon>
        <taxon>Mammalia</taxon>
        <taxon>Eutheria</taxon>
        <taxon>Euarchontoglires</taxon>
        <taxon>Primates</taxon>
        <taxon>Haplorrhini</taxon>
        <taxon>Platyrrhini</taxon>
        <taxon>Cebidae</taxon>
        <taxon>Callitrichinae</taxon>
        <taxon>Cebuella</taxon>
    </lineage>
</organism>
<evidence type="ECO:0000250" key="1"/>
<evidence type="ECO:0000250" key="2">
    <source>
        <dbReference type="UniProtKB" id="Q0PF16"/>
    </source>
</evidence>
<evidence type="ECO:0000250" key="3">
    <source>
        <dbReference type="UniProtKB" id="Q9C035"/>
    </source>
</evidence>
<evidence type="ECO:0000255" key="4"/>
<evidence type="ECO:0000255" key="5">
    <source>
        <dbReference type="PROSITE-ProRule" id="PRU00024"/>
    </source>
</evidence>
<evidence type="ECO:0000255" key="6">
    <source>
        <dbReference type="PROSITE-ProRule" id="PRU00175"/>
    </source>
</evidence>
<evidence type="ECO:0000255" key="7">
    <source>
        <dbReference type="PROSITE-ProRule" id="PRU00548"/>
    </source>
</evidence>
<evidence type="ECO:0000305" key="8"/>
<name>TRIM5_CEBPY</name>
<proteinExistence type="inferred from homology"/>
<dbReference type="EC" id="2.3.2.27"/>
<dbReference type="EMBL" id="AY843512">
    <property type="protein sequence ID" value="AAV91983.1"/>
    <property type="molecule type" value="Genomic_DNA"/>
</dbReference>
<dbReference type="SMR" id="Q5D7I5"/>
<dbReference type="UniPathway" id="UPA00143"/>
<dbReference type="GO" id="GO:0005634">
    <property type="term" value="C:nucleus"/>
    <property type="evidence" value="ECO:0007669"/>
    <property type="project" value="UniProtKB-SubCell"/>
</dbReference>
<dbReference type="GO" id="GO:0000932">
    <property type="term" value="C:P-body"/>
    <property type="evidence" value="ECO:0000250"/>
    <property type="project" value="UniProtKB"/>
</dbReference>
<dbReference type="GO" id="GO:0038187">
    <property type="term" value="F:pattern recognition receptor activity"/>
    <property type="evidence" value="ECO:0000250"/>
    <property type="project" value="UniProtKB"/>
</dbReference>
<dbReference type="GO" id="GO:0004842">
    <property type="term" value="F:ubiquitin-protein transferase activity"/>
    <property type="evidence" value="ECO:0000250"/>
    <property type="project" value="UniProtKB"/>
</dbReference>
<dbReference type="GO" id="GO:0008270">
    <property type="term" value="F:zinc ion binding"/>
    <property type="evidence" value="ECO:0007669"/>
    <property type="project" value="UniProtKB-KW"/>
</dbReference>
<dbReference type="GO" id="GO:0002218">
    <property type="term" value="P:activation of innate immune response"/>
    <property type="evidence" value="ECO:0000250"/>
    <property type="project" value="UniProtKB"/>
</dbReference>
<dbReference type="GO" id="GO:0006914">
    <property type="term" value="P:autophagy"/>
    <property type="evidence" value="ECO:0007669"/>
    <property type="project" value="UniProtKB-KW"/>
</dbReference>
<dbReference type="GO" id="GO:0051607">
    <property type="term" value="P:defense response to virus"/>
    <property type="evidence" value="ECO:0007669"/>
    <property type="project" value="UniProtKB-KW"/>
</dbReference>
<dbReference type="GO" id="GO:0045087">
    <property type="term" value="P:innate immune response"/>
    <property type="evidence" value="ECO:0007669"/>
    <property type="project" value="UniProtKB-KW"/>
</dbReference>
<dbReference type="GO" id="GO:0043123">
    <property type="term" value="P:positive regulation of canonical NF-kappaB signal transduction"/>
    <property type="evidence" value="ECO:0000250"/>
    <property type="project" value="UniProtKB"/>
</dbReference>
<dbReference type="GO" id="GO:0043410">
    <property type="term" value="P:positive regulation of MAPK cascade"/>
    <property type="evidence" value="ECO:0000250"/>
    <property type="project" value="UniProtKB"/>
</dbReference>
<dbReference type="GO" id="GO:0051092">
    <property type="term" value="P:positive regulation of NF-kappaB transcription factor activity"/>
    <property type="evidence" value="ECO:0000250"/>
    <property type="project" value="UniProtKB"/>
</dbReference>
<dbReference type="GO" id="GO:0070534">
    <property type="term" value="P:protein K63-linked ubiquitination"/>
    <property type="evidence" value="ECO:0000250"/>
    <property type="project" value="UniProtKB"/>
</dbReference>
<dbReference type="GO" id="GO:0031664">
    <property type="term" value="P:regulation of lipopolysaccharide-mediated signaling pathway"/>
    <property type="evidence" value="ECO:0000250"/>
    <property type="project" value="UniProtKB"/>
</dbReference>
<dbReference type="CDD" id="cd19761">
    <property type="entry name" value="Bbox2_TRIM5-like"/>
    <property type="match status" value="1"/>
</dbReference>
<dbReference type="CDD" id="cd16591">
    <property type="entry name" value="RING-HC_TRIM5-like_C-IV"/>
    <property type="match status" value="1"/>
</dbReference>
<dbReference type="CDD" id="cd15822">
    <property type="entry name" value="SPRY_PRY_TRIM5"/>
    <property type="match status" value="1"/>
</dbReference>
<dbReference type="FunFam" id="2.60.120.920:FF:000023">
    <property type="entry name" value="Tripartite motif-containing 5 (Predicted)"/>
    <property type="match status" value="1"/>
</dbReference>
<dbReference type="FunFam" id="3.30.160.60:FF:000386">
    <property type="entry name" value="Tripartite motif-containing 5 (Predicted)"/>
    <property type="match status" value="1"/>
</dbReference>
<dbReference type="FunFam" id="3.30.40.10:FF:000144">
    <property type="entry name" value="Tripartite motif-containing 5 (Predicted)"/>
    <property type="match status" value="1"/>
</dbReference>
<dbReference type="Gene3D" id="2.60.120.920">
    <property type="match status" value="1"/>
</dbReference>
<dbReference type="Gene3D" id="3.30.160.60">
    <property type="entry name" value="Classic Zinc Finger"/>
    <property type="match status" value="1"/>
</dbReference>
<dbReference type="Gene3D" id="3.30.40.10">
    <property type="entry name" value="Zinc/RING finger domain, C3HC4 (zinc finger)"/>
    <property type="match status" value="1"/>
</dbReference>
<dbReference type="InterPro" id="IPR001870">
    <property type="entry name" value="B30.2/SPRY"/>
</dbReference>
<dbReference type="InterPro" id="IPR043136">
    <property type="entry name" value="B30.2/SPRY_sf"/>
</dbReference>
<dbReference type="InterPro" id="IPR003879">
    <property type="entry name" value="Butyrophylin_SPRY"/>
</dbReference>
<dbReference type="InterPro" id="IPR013320">
    <property type="entry name" value="ConA-like_dom_sf"/>
</dbReference>
<dbReference type="InterPro" id="IPR003877">
    <property type="entry name" value="SPRY_dom"/>
</dbReference>
<dbReference type="InterPro" id="IPR050143">
    <property type="entry name" value="TRIM/RBCC"/>
</dbReference>
<dbReference type="InterPro" id="IPR027370">
    <property type="entry name" value="Znf-RING_euk"/>
</dbReference>
<dbReference type="InterPro" id="IPR000315">
    <property type="entry name" value="Znf_B-box"/>
</dbReference>
<dbReference type="InterPro" id="IPR001841">
    <property type="entry name" value="Znf_RING"/>
</dbReference>
<dbReference type="InterPro" id="IPR013083">
    <property type="entry name" value="Znf_RING/FYVE/PHD"/>
</dbReference>
<dbReference type="InterPro" id="IPR017907">
    <property type="entry name" value="Znf_RING_CS"/>
</dbReference>
<dbReference type="PANTHER" id="PTHR24103">
    <property type="entry name" value="E3 UBIQUITIN-PROTEIN LIGASE TRIM"/>
    <property type="match status" value="1"/>
</dbReference>
<dbReference type="Pfam" id="PF00622">
    <property type="entry name" value="SPRY"/>
    <property type="match status" value="1"/>
</dbReference>
<dbReference type="Pfam" id="PF00643">
    <property type="entry name" value="zf-B_box"/>
    <property type="match status" value="1"/>
</dbReference>
<dbReference type="Pfam" id="PF13445">
    <property type="entry name" value="zf-RING_UBOX"/>
    <property type="match status" value="1"/>
</dbReference>
<dbReference type="PRINTS" id="PR01407">
    <property type="entry name" value="BUTYPHLNCDUF"/>
</dbReference>
<dbReference type="SMART" id="SM00336">
    <property type="entry name" value="BBOX"/>
    <property type="match status" value="1"/>
</dbReference>
<dbReference type="SMART" id="SM00184">
    <property type="entry name" value="RING"/>
    <property type="match status" value="1"/>
</dbReference>
<dbReference type="SMART" id="SM00449">
    <property type="entry name" value="SPRY"/>
    <property type="match status" value="1"/>
</dbReference>
<dbReference type="SUPFAM" id="SSF57845">
    <property type="entry name" value="B-box zinc-binding domain"/>
    <property type="match status" value="1"/>
</dbReference>
<dbReference type="SUPFAM" id="SSF49899">
    <property type="entry name" value="Concanavalin A-like lectins/glucanases"/>
    <property type="match status" value="1"/>
</dbReference>
<dbReference type="SUPFAM" id="SSF57850">
    <property type="entry name" value="RING/U-box"/>
    <property type="match status" value="1"/>
</dbReference>
<dbReference type="PROSITE" id="PS50188">
    <property type="entry name" value="B302_SPRY"/>
    <property type="match status" value="1"/>
</dbReference>
<dbReference type="PROSITE" id="PS50119">
    <property type="entry name" value="ZF_BBOX"/>
    <property type="match status" value="1"/>
</dbReference>
<dbReference type="PROSITE" id="PS00518">
    <property type="entry name" value="ZF_RING_1"/>
    <property type="match status" value="1"/>
</dbReference>
<dbReference type="PROSITE" id="PS50089">
    <property type="entry name" value="ZF_RING_2"/>
    <property type="match status" value="1"/>
</dbReference>
<reference key="1">
    <citation type="journal article" date="2005" name="Proc. Natl. Acad. Sci. U.S.A.">
        <title>Positive selection of primate TRIM5alpha identifies a critical species-specific retroviral restriction domain.</title>
        <authorList>
            <person name="Sawyer S.L."/>
            <person name="Wu L.I."/>
            <person name="Emerman M."/>
            <person name="Malik H.S."/>
        </authorList>
    </citation>
    <scope>NUCLEOTIDE SEQUENCE [GENOMIC DNA]</scope>
</reference>